<evidence type="ECO:0000255" key="1">
    <source>
        <dbReference type="HAMAP-Rule" id="MF_00156"/>
    </source>
</evidence>
<keyword id="KW-0963">Cytoplasm</keyword>
<keyword id="KW-0460">Magnesium</keyword>
<keyword id="KW-0479">Metal-binding</keyword>
<keyword id="KW-0566">Pantothenate biosynthesis</keyword>
<keyword id="KW-0808">Transferase</keyword>
<feature type="chain" id="PRO_1000011383" description="3-methyl-2-oxobutanoate hydroxymethyltransferase">
    <location>
        <begin position="1"/>
        <end position="264"/>
    </location>
</feature>
<feature type="active site" description="Proton acceptor" evidence="1">
    <location>
        <position position="181"/>
    </location>
</feature>
<feature type="binding site" evidence="1">
    <location>
        <begin position="45"/>
        <end position="46"/>
    </location>
    <ligand>
        <name>3-methyl-2-oxobutanoate</name>
        <dbReference type="ChEBI" id="CHEBI:11851"/>
    </ligand>
</feature>
<feature type="binding site" evidence="1">
    <location>
        <position position="45"/>
    </location>
    <ligand>
        <name>Mg(2+)</name>
        <dbReference type="ChEBI" id="CHEBI:18420"/>
    </ligand>
</feature>
<feature type="binding site" evidence="1">
    <location>
        <position position="84"/>
    </location>
    <ligand>
        <name>3-methyl-2-oxobutanoate</name>
        <dbReference type="ChEBI" id="CHEBI:11851"/>
    </ligand>
</feature>
<feature type="binding site" evidence="1">
    <location>
        <position position="84"/>
    </location>
    <ligand>
        <name>Mg(2+)</name>
        <dbReference type="ChEBI" id="CHEBI:18420"/>
    </ligand>
</feature>
<feature type="binding site" evidence="1">
    <location>
        <position position="112"/>
    </location>
    <ligand>
        <name>3-methyl-2-oxobutanoate</name>
        <dbReference type="ChEBI" id="CHEBI:11851"/>
    </ligand>
</feature>
<feature type="binding site" evidence="1">
    <location>
        <position position="114"/>
    </location>
    <ligand>
        <name>Mg(2+)</name>
        <dbReference type="ChEBI" id="CHEBI:18420"/>
    </ligand>
</feature>
<accession>A7MYX2</accession>
<organism>
    <name type="scientific">Vibrio campbellii (strain ATCC BAA-1116)</name>
    <dbReference type="NCBI Taxonomy" id="2902295"/>
    <lineage>
        <taxon>Bacteria</taxon>
        <taxon>Pseudomonadati</taxon>
        <taxon>Pseudomonadota</taxon>
        <taxon>Gammaproteobacteria</taxon>
        <taxon>Vibrionales</taxon>
        <taxon>Vibrionaceae</taxon>
        <taxon>Vibrio</taxon>
    </lineage>
</organism>
<gene>
    <name evidence="1" type="primary">panB</name>
    <name type="ordered locus">VIBHAR_03450</name>
</gene>
<reference key="1">
    <citation type="submission" date="2007-08" db="EMBL/GenBank/DDBJ databases">
        <authorList>
            <consortium name="The Vibrio harveyi Genome Sequencing Project"/>
            <person name="Bassler B."/>
            <person name="Clifton S.W."/>
            <person name="Fulton L."/>
            <person name="Delehaunty K."/>
            <person name="Fronick C."/>
            <person name="Harrison M."/>
            <person name="Markivic C."/>
            <person name="Fulton R."/>
            <person name="Tin-Wollam A.-M."/>
            <person name="Shah N."/>
            <person name="Pepin K."/>
            <person name="Nash W."/>
            <person name="Thiruvilangam P."/>
            <person name="Bhonagiri V."/>
            <person name="Waters C."/>
            <person name="Tu K.C."/>
            <person name="Irgon J."/>
            <person name="Wilson R.K."/>
        </authorList>
    </citation>
    <scope>NUCLEOTIDE SEQUENCE [LARGE SCALE GENOMIC DNA]</scope>
    <source>
        <strain>ATCC BAA-1116 / BB120</strain>
    </source>
</reference>
<name>PANB_VIBC1</name>
<protein>
    <recommendedName>
        <fullName evidence="1">3-methyl-2-oxobutanoate hydroxymethyltransferase</fullName>
        <ecNumber evidence="1">2.1.2.11</ecNumber>
    </recommendedName>
    <alternativeName>
        <fullName evidence="1">Ketopantoate hydroxymethyltransferase</fullName>
        <shortName evidence="1">KPHMT</shortName>
    </alternativeName>
</protein>
<proteinExistence type="inferred from homology"/>
<comment type="function">
    <text evidence="1">Catalyzes the reversible reaction in which hydroxymethyl group from 5,10-methylenetetrahydrofolate is transferred onto alpha-ketoisovalerate to form ketopantoate.</text>
</comment>
<comment type="catalytic activity">
    <reaction evidence="1">
        <text>3-methyl-2-oxobutanoate + (6R)-5,10-methylene-5,6,7,8-tetrahydrofolate + H2O = 2-dehydropantoate + (6S)-5,6,7,8-tetrahydrofolate</text>
        <dbReference type="Rhea" id="RHEA:11824"/>
        <dbReference type="ChEBI" id="CHEBI:11561"/>
        <dbReference type="ChEBI" id="CHEBI:11851"/>
        <dbReference type="ChEBI" id="CHEBI:15377"/>
        <dbReference type="ChEBI" id="CHEBI:15636"/>
        <dbReference type="ChEBI" id="CHEBI:57453"/>
        <dbReference type="EC" id="2.1.2.11"/>
    </reaction>
</comment>
<comment type="cofactor">
    <cofactor evidence="1">
        <name>Mg(2+)</name>
        <dbReference type="ChEBI" id="CHEBI:18420"/>
    </cofactor>
    <text evidence="1">Binds 1 Mg(2+) ion per subunit.</text>
</comment>
<comment type="pathway">
    <text evidence="1">Cofactor biosynthesis; (R)-pantothenate biosynthesis; (R)-pantoate from 3-methyl-2-oxobutanoate: step 1/2.</text>
</comment>
<comment type="subunit">
    <text evidence="1">Homodecamer; pentamer of dimers.</text>
</comment>
<comment type="subcellular location">
    <subcellularLocation>
        <location evidence="1">Cytoplasm</location>
    </subcellularLocation>
</comment>
<comment type="similarity">
    <text evidence="1">Belongs to the PanB family.</text>
</comment>
<dbReference type="EC" id="2.1.2.11" evidence="1"/>
<dbReference type="EMBL" id="CP000789">
    <property type="protein sequence ID" value="ABU72395.1"/>
    <property type="molecule type" value="Genomic_DNA"/>
</dbReference>
<dbReference type="RefSeq" id="WP_005531735.1">
    <property type="nucleotide sequence ID" value="NC_022269.1"/>
</dbReference>
<dbReference type="SMR" id="A7MYX2"/>
<dbReference type="GeneID" id="67376335"/>
<dbReference type="KEGG" id="vha:VIBHAR_03450"/>
<dbReference type="PATRIC" id="fig|338187.25.peg.2750"/>
<dbReference type="UniPathway" id="UPA00028">
    <property type="reaction ID" value="UER00003"/>
</dbReference>
<dbReference type="Proteomes" id="UP000008152">
    <property type="component" value="Chromosome I"/>
</dbReference>
<dbReference type="GO" id="GO:0005737">
    <property type="term" value="C:cytoplasm"/>
    <property type="evidence" value="ECO:0007669"/>
    <property type="project" value="UniProtKB-SubCell"/>
</dbReference>
<dbReference type="GO" id="GO:0003864">
    <property type="term" value="F:3-methyl-2-oxobutanoate hydroxymethyltransferase activity"/>
    <property type="evidence" value="ECO:0007669"/>
    <property type="project" value="UniProtKB-UniRule"/>
</dbReference>
<dbReference type="GO" id="GO:0000287">
    <property type="term" value="F:magnesium ion binding"/>
    <property type="evidence" value="ECO:0007669"/>
    <property type="project" value="TreeGrafter"/>
</dbReference>
<dbReference type="GO" id="GO:0015940">
    <property type="term" value="P:pantothenate biosynthetic process"/>
    <property type="evidence" value="ECO:0007669"/>
    <property type="project" value="UniProtKB-UniRule"/>
</dbReference>
<dbReference type="CDD" id="cd06557">
    <property type="entry name" value="KPHMT-like"/>
    <property type="match status" value="1"/>
</dbReference>
<dbReference type="FunFam" id="3.20.20.60:FF:000003">
    <property type="entry name" value="3-methyl-2-oxobutanoate hydroxymethyltransferase"/>
    <property type="match status" value="1"/>
</dbReference>
<dbReference type="Gene3D" id="3.20.20.60">
    <property type="entry name" value="Phosphoenolpyruvate-binding domains"/>
    <property type="match status" value="1"/>
</dbReference>
<dbReference type="HAMAP" id="MF_00156">
    <property type="entry name" value="PanB"/>
    <property type="match status" value="1"/>
</dbReference>
<dbReference type="InterPro" id="IPR003700">
    <property type="entry name" value="Pantoate_hydroxy_MeTrfase"/>
</dbReference>
<dbReference type="InterPro" id="IPR015813">
    <property type="entry name" value="Pyrv/PenolPyrv_kinase-like_dom"/>
</dbReference>
<dbReference type="InterPro" id="IPR040442">
    <property type="entry name" value="Pyrv_kinase-like_dom_sf"/>
</dbReference>
<dbReference type="NCBIfam" id="TIGR00222">
    <property type="entry name" value="panB"/>
    <property type="match status" value="1"/>
</dbReference>
<dbReference type="NCBIfam" id="NF001452">
    <property type="entry name" value="PRK00311.1"/>
    <property type="match status" value="1"/>
</dbReference>
<dbReference type="PANTHER" id="PTHR20881">
    <property type="entry name" value="3-METHYL-2-OXOBUTANOATE HYDROXYMETHYLTRANSFERASE"/>
    <property type="match status" value="1"/>
</dbReference>
<dbReference type="PANTHER" id="PTHR20881:SF0">
    <property type="entry name" value="3-METHYL-2-OXOBUTANOATE HYDROXYMETHYLTRANSFERASE"/>
    <property type="match status" value="1"/>
</dbReference>
<dbReference type="Pfam" id="PF02548">
    <property type="entry name" value="Pantoate_transf"/>
    <property type="match status" value="1"/>
</dbReference>
<dbReference type="PIRSF" id="PIRSF000388">
    <property type="entry name" value="Pantoate_hydroxy_MeTrfase"/>
    <property type="match status" value="1"/>
</dbReference>
<dbReference type="SUPFAM" id="SSF51621">
    <property type="entry name" value="Phosphoenolpyruvate/pyruvate domain"/>
    <property type="match status" value="1"/>
</dbReference>
<sequence length="264" mass="28627">MKKMTINDLIKWKQEGRKFATSTAYDASFAQLFESQEMPVLLVGDSLGMVLQGKTDTLPVTVEDIAYHTRSVRAGSPNCLLMADMPFMSYATPEQACENAATLMRAGANMVKIEGGDWLVDTVKMLTERAVPVCAHLGLTPQSVNIFGGYKVQGRDQEKADRMVKDALALQEAGAQIVLLECVPAELAARITQVLDVPVIGIGAGNVTDGQILVMHDMFGISANYMPKFSKNFLAETGDMRKAVAQYMAEVESGAFPDEAHTIA</sequence>